<organism>
    <name type="scientific">Gallus gallus</name>
    <name type="common">Chicken</name>
    <dbReference type="NCBI Taxonomy" id="9031"/>
    <lineage>
        <taxon>Eukaryota</taxon>
        <taxon>Metazoa</taxon>
        <taxon>Chordata</taxon>
        <taxon>Craniata</taxon>
        <taxon>Vertebrata</taxon>
        <taxon>Euteleostomi</taxon>
        <taxon>Archelosauria</taxon>
        <taxon>Archosauria</taxon>
        <taxon>Dinosauria</taxon>
        <taxon>Saurischia</taxon>
        <taxon>Theropoda</taxon>
        <taxon>Coelurosauria</taxon>
        <taxon>Aves</taxon>
        <taxon>Neognathae</taxon>
        <taxon>Galloanserae</taxon>
        <taxon>Galliformes</taxon>
        <taxon>Phasianidae</taxon>
        <taxon>Phasianinae</taxon>
        <taxon>Gallus</taxon>
    </lineage>
</organism>
<dbReference type="EMBL" id="AJ720549">
    <property type="protein sequence ID" value="CAG32208.1"/>
    <property type="molecule type" value="mRNA"/>
</dbReference>
<dbReference type="RefSeq" id="NP_001026561.1">
    <property type="nucleotide sequence ID" value="NM_001031390.1"/>
</dbReference>
<dbReference type="SMR" id="Q5ZJ85"/>
<dbReference type="FunCoup" id="Q5ZJ85">
    <property type="interactions" value="2904"/>
</dbReference>
<dbReference type="STRING" id="9031.ENSGALP00000039818"/>
<dbReference type="GlyGen" id="Q5ZJ85">
    <property type="glycosylation" value="1 site"/>
</dbReference>
<dbReference type="PaxDb" id="9031-ENSGALP00000039818"/>
<dbReference type="GeneID" id="426667"/>
<dbReference type="KEGG" id="gga:426667"/>
<dbReference type="CTD" id="9129"/>
<dbReference type="VEuPathDB" id="HostDB:geneid_426667"/>
<dbReference type="eggNOG" id="KOG2769">
    <property type="taxonomic scope" value="Eukaryota"/>
</dbReference>
<dbReference type="InParanoid" id="Q5ZJ85"/>
<dbReference type="OrthoDB" id="10264544at2759"/>
<dbReference type="PhylomeDB" id="Q5ZJ85"/>
<dbReference type="PRO" id="PR:Q5ZJ85"/>
<dbReference type="Proteomes" id="UP000000539">
    <property type="component" value="Unassembled WGS sequence"/>
</dbReference>
<dbReference type="GO" id="GO:0016607">
    <property type="term" value="C:nuclear speck"/>
    <property type="evidence" value="ECO:0007669"/>
    <property type="project" value="UniProtKB-SubCell"/>
</dbReference>
<dbReference type="GO" id="GO:0005634">
    <property type="term" value="C:nucleus"/>
    <property type="evidence" value="ECO:0000250"/>
    <property type="project" value="UniProtKB"/>
</dbReference>
<dbReference type="GO" id="GO:0005681">
    <property type="term" value="C:spliceosomal complex"/>
    <property type="evidence" value="ECO:0007669"/>
    <property type="project" value="UniProtKB-KW"/>
</dbReference>
<dbReference type="GO" id="GO:0046540">
    <property type="term" value="C:U4/U6 x U5 tri-snRNP complex"/>
    <property type="evidence" value="ECO:0000250"/>
    <property type="project" value="UniProtKB"/>
</dbReference>
<dbReference type="GO" id="GO:0000398">
    <property type="term" value="P:mRNA splicing, via spliceosome"/>
    <property type="evidence" value="ECO:0000250"/>
    <property type="project" value="UniProtKB"/>
</dbReference>
<dbReference type="GO" id="GO:0000244">
    <property type="term" value="P:spliceosomal tri-snRNP complex assembly"/>
    <property type="evidence" value="ECO:0000250"/>
    <property type="project" value="UniProtKB"/>
</dbReference>
<dbReference type="CDD" id="cd24162">
    <property type="entry name" value="Prp3_C"/>
    <property type="match status" value="1"/>
</dbReference>
<dbReference type="FunFam" id="1.20.1390.10:FF:000003">
    <property type="entry name" value="U4/U6 small nuclear ribonucleoprotein Prp3"/>
    <property type="match status" value="1"/>
</dbReference>
<dbReference type="Gene3D" id="1.20.1390.10">
    <property type="entry name" value="PWI domain"/>
    <property type="match status" value="1"/>
</dbReference>
<dbReference type="InterPro" id="IPR013881">
    <property type="entry name" value="Pre-mRNA_splic_Prp3_dom"/>
</dbReference>
<dbReference type="InterPro" id="IPR027104">
    <property type="entry name" value="Prp3"/>
</dbReference>
<dbReference type="InterPro" id="IPR010541">
    <property type="entry name" value="Prp3_C"/>
</dbReference>
<dbReference type="InterPro" id="IPR002483">
    <property type="entry name" value="PWI_dom"/>
</dbReference>
<dbReference type="InterPro" id="IPR036483">
    <property type="entry name" value="PWI_dom_sf"/>
</dbReference>
<dbReference type="PANTHER" id="PTHR14212">
    <property type="entry name" value="U4/U6-ASSOCIATED RNA SPLICING FACTOR-RELATED"/>
    <property type="match status" value="1"/>
</dbReference>
<dbReference type="PANTHER" id="PTHR14212:SF0">
    <property type="entry name" value="U4_U6 SMALL NUCLEAR RIBONUCLEOPROTEIN PRP3"/>
    <property type="match status" value="1"/>
</dbReference>
<dbReference type="Pfam" id="PF08572">
    <property type="entry name" value="PRP3"/>
    <property type="match status" value="1"/>
</dbReference>
<dbReference type="Pfam" id="PF06544">
    <property type="entry name" value="Prp3_C"/>
    <property type="match status" value="1"/>
</dbReference>
<dbReference type="Pfam" id="PF01480">
    <property type="entry name" value="PWI"/>
    <property type="match status" value="1"/>
</dbReference>
<dbReference type="SMART" id="SM00311">
    <property type="entry name" value="PWI"/>
    <property type="match status" value="1"/>
</dbReference>
<dbReference type="SUPFAM" id="SSF101233">
    <property type="entry name" value="PWI domain"/>
    <property type="match status" value="1"/>
</dbReference>
<dbReference type="PROSITE" id="PS51025">
    <property type="entry name" value="PWI"/>
    <property type="match status" value="1"/>
</dbReference>
<accession>Q5ZJ85</accession>
<evidence type="ECO:0000250" key="1">
    <source>
        <dbReference type="UniProtKB" id="O43395"/>
    </source>
</evidence>
<evidence type="ECO:0000255" key="2">
    <source>
        <dbReference type="PROSITE-ProRule" id="PRU00627"/>
    </source>
</evidence>
<evidence type="ECO:0000256" key="3">
    <source>
        <dbReference type="SAM" id="MobiDB-lite"/>
    </source>
</evidence>
<sequence length="684" mass="77386">MSLSKRELDELKPWIEKTVKRVLGFSEPTVVTAALNCVGKGMDKKKAADHLKPFLDDSTLRFVDKLFEAVEEGRSSRHSKSNSDRNRKRELKDVFGDDSEVSKESSGVKKRRIPRFEEVEDEPEVIPGPPSESPGMLTKLQIKQMMEAATRQIEERKKQLSFISPPTPQPKISSSSQSERLPIGNTVQPSQAATFMNDAIEKARKAAELQARIQAQLALKPGLIGNANMVGLANLHAMGIAPPKVELKDQTKPTPLILDEQGRTVDATGKEIELTHRMPTLKANIRAVKREQFKQQLKEKPSEDMESNTYFDLRVSITPAQRQKRTFKFHEKGKFEKIAQRLRTKAQLKKLQAEISQAARKTGIHTSTKLALITPKKELKEGEIPEIEWWDSYIIPNGLDLKGGTSSKKDEYFGITNLVEHPAQLNPPVDSDTPVTLGVYLTKKEQKKLRRQTRREAQKELQEKVRLGLMPPPEPKVRISNLMRVLGTEAVQDPTKVEAHVRAQMAKRQKAHEEANAARKLTAEQRKAKKIKKLKEDVSQGVHIAVYRVRNLSNPAKKFKIEANAGQLYLTGVVVLHKDVNVVVVEGGPKAQKKFKRLMLHRIKWDEQTSNTKGEDDDESDEESVKKTNKCSLVWEGTAKDRSFGEMKFKQCPTENMAREHFKKHGAEHYWDLALSESVLESTD</sequence>
<name>PRPF3_CHICK</name>
<comment type="function">
    <text evidence="1">Plays a role in pre-mRNA splicing as component of the U4/U6-U5 tri-snRNP complex that is involved in spliceosome assembly, and as component of the precatalytic spliceosome (spliceosome B complex).</text>
</comment>
<comment type="subunit">
    <text evidence="1">Component of the precatalytic spliceosome (spliceosome B complex) (By similarity). Component of the U4/U6-U5 tri-snRNP complex, a building block of the precatalytic spliceosome (spliceosome B complex) (By similarity). The U4/U6-U5 tri-snRNP complex is composed of the U4, U6 and U5 snRNAs and at least PRPF3, PRPF4, PRPF6, PRPF8, PRPF31, SNRNP200, TXNL4A, SNRNP40, SNRPB, SNRPD1, SNRPD2, SNRPD3, SNRPE, SNRPF, SNRPG, DDX23, CD2BP2, PPIH, SNU13, EFTUD2, SART1 and USP39, plus LSM2, LSM3, LSM4, LSM5, LSM6, LSM7 and LSM8 (By similarity).</text>
</comment>
<comment type="subcellular location">
    <subcellularLocation>
        <location evidence="1">Nucleus</location>
    </subcellularLocation>
    <subcellularLocation>
        <location evidence="2">Nucleus speckle</location>
    </subcellularLocation>
</comment>
<feature type="chain" id="PRO_0000312364" description="U4/U6 small nuclear ribonucleoprotein Prp3">
    <location>
        <begin position="1"/>
        <end position="684"/>
    </location>
</feature>
<feature type="domain" description="PWI" evidence="2">
    <location>
        <begin position="1"/>
        <end position="87"/>
    </location>
</feature>
<feature type="region of interest" description="Disordered" evidence="3">
    <location>
        <begin position="73"/>
        <end position="109"/>
    </location>
</feature>
<feature type="region of interest" description="Disordered" evidence="3">
    <location>
        <begin position="162"/>
        <end position="183"/>
    </location>
</feature>
<feature type="compositionally biased region" description="Basic and acidic residues" evidence="3">
    <location>
        <begin position="73"/>
        <end position="107"/>
    </location>
</feature>
<feature type="compositionally biased region" description="Polar residues" evidence="3">
    <location>
        <begin position="170"/>
        <end position="183"/>
    </location>
</feature>
<protein>
    <recommendedName>
        <fullName>U4/U6 small nuclear ribonucleoprotein Prp3</fullName>
    </recommendedName>
    <alternativeName>
        <fullName>Pre-mRNA-splicing factor 3</fullName>
    </alternativeName>
</protein>
<keyword id="KW-0507">mRNA processing</keyword>
<keyword id="KW-0508">mRNA splicing</keyword>
<keyword id="KW-0539">Nucleus</keyword>
<keyword id="KW-0597">Phosphoprotein</keyword>
<keyword id="KW-1185">Reference proteome</keyword>
<keyword id="KW-0747">Spliceosome</keyword>
<reference key="1">
    <citation type="journal article" date="2005" name="Genome Biol.">
        <title>Full-length cDNAs from chicken bursal lymphocytes to facilitate gene function analysis.</title>
        <authorList>
            <person name="Caldwell R.B."/>
            <person name="Kierzek A.M."/>
            <person name="Arakawa H."/>
            <person name="Bezzubov Y."/>
            <person name="Zaim J."/>
            <person name="Fiedler P."/>
            <person name="Kutter S."/>
            <person name="Blagodatski A."/>
            <person name="Kostovska D."/>
            <person name="Koter M."/>
            <person name="Plachy J."/>
            <person name="Carninci P."/>
            <person name="Hayashizaki Y."/>
            <person name="Buerstedde J.-M."/>
        </authorList>
    </citation>
    <scope>NUCLEOTIDE SEQUENCE [LARGE SCALE MRNA]</scope>
    <source>
        <strain>CB</strain>
        <tissue>Bursa of Fabricius</tissue>
    </source>
</reference>
<gene>
    <name type="primary">PRPF3</name>
    <name type="ORF">RCJMB04_20b24</name>
</gene>
<proteinExistence type="evidence at transcript level"/>